<keyword id="KW-0238">DNA-binding</keyword>
<keyword id="KW-0278">Fertilization</keyword>
<keyword id="KW-0539">Nucleus</keyword>
<keyword id="KW-0804">Transcription</keyword>
<keyword id="KW-0805">Transcription regulation</keyword>
<reference key="1">
    <citation type="journal article" date="1993" name="Mol. Gen. Genet.">
        <title>Cloning and analysis of the mating type genes from Cochliobolus heterostrophus.</title>
        <authorList>
            <person name="Turgeon B.G."/>
            <person name="Bohlmann H."/>
            <person name="Ciuffetti L.M."/>
            <person name="Christiansen S.K."/>
            <person name="Yang G."/>
            <person name="Schaefer W."/>
            <person name="Yoder O.C."/>
        </authorList>
    </citation>
    <scope>NUCLEOTIDE SEQUENCE [GENOMIC DNA]</scope>
    <source>
        <strain>ATCC 48329 / C2</strain>
    </source>
</reference>
<reference key="2">
    <citation type="journal article" date="1998" name="Mol. Gen. Genet.">
        <title>Single mating type-specific genes and their 3' UTRs control mating and fertility in Cochliobolus heterostrophus.</title>
        <authorList>
            <person name="Wirsel S."/>
            <person name="Horwitz B."/>
            <person name="Yamaguchi K."/>
            <person name="Yoder O.C."/>
            <person name="Turgeon B.G."/>
        </authorList>
    </citation>
    <scope>NUCLEOTIDE SEQUENCE [GENOMIC DNA]</scope>
    <source>
        <strain>ATCC 48332 / C5</strain>
    </source>
</reference>
<name>MAT1_COCHE</name>
<sequence length="383" mass="42195">MAHARDPTGAEIARFIATRTGAQMVQLMRCIKEPAAQAAFTAKLLVVPPAVSGRPATPEKARKALNAFVGFRCYYVTIPMFKSWPMKKLSNLIGLLWEADPNKSLWSLMAKAWSTIRDQIGKDQAPLDQFFRIICPHLKLPDPASYLEIHGWILTVNEEGDPTISRSADSEFVSIGTGNTDVALSVEDIITYVQSLGYAHGFILDDNKPSSTFLGQSVSSTLEKNTSAISVTQATPNAAHARFLVRNKRRAKRQAVRNASYRASLDQDILIAHQFNPAPVDEHMPDCHSNTAPVLDQCHNPSPNQFYDGITTLLSDQIPTGQGDAGHLDNAHLFNDYSLPGDVSFITIDDFTTNMPNLIDYDAFRLGADEDVALPIFDDITHI</sequence>
<accession>Q02990</accession>
<gene>
    <name type="primary">MAT1</name>
</gene>
<feature type="chain" id="PRO_0000206012" description="Mating-type protein MAT-1">
    <location>
        <begin position="1"/>
        <end position="383"/>
    </location>
</feature>
<feature type="DNA-binding region" description="Alpha box" evidence="2">
    <location>
        <begin position="60"/>
        <end position="117"/>
    </location>
</feature>
<comment type="function">
    <text evidence="1">Mating type proteins are sequence specific DNA-binding proteins that act as master switches in fungal differentiation by controlling gene expression in a cell type-specific fashion. Transcriptional activator that induces the transcription of alpha-specific genes.</text>
</comment>
<comment type="subcellular location">
    <subcellularLocation>
        <location evidence="2">Nucleus</location>
    </subcellularLocation>
</comment>
<comment type="similarity">
    <text evidence="2">Belongs to the MATALPHA1 family.</text>
</comment>
<organism>
    <name type="scientific">Cochliobolus heterostrophus</name>
    <name type="common">Southern corn leaf blight fungus</name>
    <name type="synonym">Bipolaris maydis</name>
    <dbReference type="NCBI Taxonomy" id="5016"/>
    <lineage>
        <taxon>Eukaryota</taxon>
        <taxon>Fungi</taxon>
        <taxon>Dikarya</taxon>
        <taxon>Ascomycota</taxon>
        <taxon>Pezizomycotina</taxon>
        <taxon>Dothideomycetes</taxon>
        <taxon>Pleosporomycetidae</taxon>
        <taxon>Pleosporales</taxon>
        <taxon>Pleosporineae</taxon>
        <taxon>Pleosporaceae</taxon>
        <taxon>Bipolaris</taxon>
    </lineage>
</organism>
<evidence type="ECO:0000250" key="1">
    <source>
        <dbReference type="UniProtKB" id="P0CY06"/>
    </source>
</evidence>
<evidence type="ECO:0000255" key="2">
    <source>
        <dbReference type="PROSITE-ProRule" id="PRU00655"/>
    </source>
</evidence>
<dbReference type="EMBL" id="X68399">
    <property type="protein sequence ID" value="CAA48465.1"/>
    <property type="molecule type" value="Genomic_DNA"/>
</dbReference>
<dbReference type="EMBL" id="AF029913">
    <property type="protein sequence ID" value="AAB82945.1"/>
    <property type="molecule type" value="Genomic_DNA"/>
</dbReference>
<dbReference type="PIR" id="S34810">
    <property type="entry name" value="S34810"/>
</dbReference>
<dbReference type="SMR" id="Q02990"/>
<dbReference type="OMA" id="SLMAKAW"/>
<dbReference type="GO" id="GO:0005634">
    <property type="term" value="C:nucleus"/>
    <property type="evidence" value="ECO:0007669"/>
    <property type="project" value="UniProtKB-SubCell"/>
</dbReference>
<dbReference type="GO" id="GO:0008301">
    <property type="term" value="F:DNA binding, bending"/>
    <property type="evidence" value="ECO:0007669"/>
    <property type="project" value="InterPro"/>
</dbReference>
<dbReference type="GO" id="GO:0045895">
    <property type="term" value="P:positive regulation of mating-type specific transcription, DNA-templated"/>
    <property type="evidence" value="ECO:0007669"/>
    <property type="project" value="InterPro"/>
</dbReference>
<dbReference type="GO" id="GO:0007338">
    <property type="term" value="P:single fertilization"/>
    <property type="evidence" value="ECO:0007669"/>
    <property type="project" value="UniProtKB-KW"/>
</dbReference>
<dbReference type="InterPro" id="IPR006856">
    <property type="entry name" value="MATalpha_HMGbox"/>
</dbReference>
<dbReference type="Pfam" id="PF04769">
    <property type="entry name" value="MATalpha_HMGbox"/>
    <property type="match status" value="1"/>
</dbReference>
<dbReference type="PROSITE" id="PS51325">
    <property type="entry name" value="ALPHA_BOX"/>
    <property type="match status" value="1"/>
</dbReference>
<proteinExistence type="inferred from homology"/>
<protein>
    <recommendedName>
        <fullName>Mating-type protein MAT-1</fullName>
    </recommendedName>
</protein>